<name>YQGF_FRATN</name>
<sequence length="136" mass="15494">MFQSLIAIDYGKARIGIASGQMITKTATPIGTVEAYDGVPNWIELDKIIKRWNPSDIIIGLPLDTQNFETDITKAAKDFAKEVQQRYQRKVHLINEAYSTREARWRLEEVKSKKVSHIKVDALAACVILETWMSEN</sequence>
<evidence type="ECO:0000255" key="1">
    <source>
        <dbReference type="HAMAP-Rule" id="MF_00651"/>
    </source>
</evidence>
<proteinExistence type="inferred from homology"/>
<dbReference type="EC" id="3.1.-.-" evidence="1"/>
<dbReference type="EMBL" id="CP000439">
    <property type="protein sequence ID" value="ABK89755.1"/>
    <property type="molecule type" value="Genomic_DNA"/>
</dbReference>
<dbReference type="SMR" id="A0Q690"/>
<dbReference type="KEGG" id="ftn:FTN_0867"/>
<dbReference type="KEGG" id="ftx:AW25_1151"/>
<dbReference type="BioCyc" id="FTUL401614:G1G75-903-MONOMER"/>
<dbReference type="Proteomes" id="UP000000762">
    <property type="component" value="Chromosome"/>
</dbReference>
<dbReference type="GO" id="GO:0005829">
    <property type="term" value="C:cytosol"/>
    <property type="evidence" value="ECO:0007669"/>
    <property type="project" value="TreeGrafter"/>
</dbReference>
<dbReference type="GO" id="GO:0004518">
    <property type="term" value="F:nuclease activity"/>
    <property type="evidence" value="ECO:0007669"/>
    <property type="project" value="UniProtKB-KW"/>
</dbReference>
<dbReference type="GO" id="GO:0000967">
    <property type="term" value="P:rRNA 5'-end processing"/>
    <property type="evidence" value="ECO:0007669"/>
    <property type="project" value="UniProtKB-UniRule"/>
</dbReference>
<dbReference type="CDD" id="cd16964">
    <property type="entry name" value="YqgF"/>
    <property type="match status" value="1"/>
</dbReference>
<dbReference type="Gene3D" id="3.30.420.140">
    <property type="entry name" value="YqgF/RNase H-like domain"/>
    <property type="match status" value="1"/>
</dbReference>
<dbReference type="HAMAP" id="MF_00651">
    <property type="entry name" value="Nuclease_YqgF"/>
    <property type="match status" value="1"/>
</dbReference>
<dbReference type="InterPro" id="IPR012337">
    <property type="entry name" value="RNaseH-like_sf"/>
</dbReference>
<dbReference type="InterPro" id="IPR005227">
    <property type="entry name" value="YqgF"/>
</dbReference>
<dbReference type="InterPro" id="IPR006641">
    <property type="entry name" value="YqgF/RNaseH-like_dom"/>
</dbReference>
<dbReference type="InterPro" id="IPR037027">
    <property type="entry name" value="YqgF/RNaseH-like_dom_sf"/>
</dbReference>
<dbReference type="NCBIfam" id="TIGR00250">
    <property type="entry name" value="RNAse_H_YqgF"/>
    <property type="match status" value="1"/>
</dbReference>
<dbReference type="PANTHER" id="PTHR33317">
    <property type="entry name" value="POLYNUCLEOTIDYL TRANSFERASE, RIBONUCLEASE H-LIKE SUPERFAMILY PROTEIN"/>
    <property type="match status" value="1"/>
</dbReference>
<dbReference type="PANTHER" id="PTHR33317:SF4">
    <property type="entry name" value="POLYNUCLEOTIDYL TRANSFERASE, RIBONUCLEASE H-LIKE SUPERFAMILY PROTEIN"/>
    <property type="match status" value="1"/>
</dbReference>
<dbReference type="Pfam" id="PF03652">
    <property type="entry name" value="RuvX"/>
    <property type="match status" value="1"/>
</dbReference>
<dbReference type="SMART" id="SM00732">
    <property type="entry name" value="YqgFc"/>
    <property type="match status" value="1"/>
</dbReference>
<dbReference type="SUPFAM" id="SSF53098">
    <property type="entry name" value="Ribonuclease H-like"/>
    <property type="match status" value="1"/>
</dbReference>
<comment type="function">
    <text evidence="1">Could be a nuclease involved in processing of the 5'-end of pre-16S rRNA.</text>
</comment>
<comment type="subcellular location">
    <subcellularLocation>
        <location evidence="1">Cytoplasm</location>
    </subcellularLocation>
</comment>
<comment type="similarity">
    <text evidence="1">Belongs to the YqgF nuclease family.</text>
</comment>
<gene>
    <name type="ordered locus">FTN_0867</name>
</gene>
<feature type="chain" id="PRO_1000061517" description="Putative pre-16S rRNA nuclease">
    <location>
        <begin position="1"/>
        <end position="136"/>
    </location>
</feature>
<organism>
    <name type="scientific">Francisella tularensis subsp. novicida (strain U112)</name>
    <dbReference type="NCBI Taxonomy" id="401614"/>
    <lineage>
        <taxon>Bacteria</taxon>
        <taxon>Pseudomonadati</taxon>
        <taxon>Pseudomonadota</taxon>
        <taxon>Gammaproteobacteria</taxon>
        <taxon>Thiotrichales</taxon>
        <taxon>Francisellaceae</taxon>
        <taxon>Francisella</taxon>
    </lineage>
</organism>
<reference key="1">
    <citation type="journal article" date="2007" name="Genome Biol.">
        <title>Comparison of Francisella tularensis genomes reveals evolutionary events associated with the emergence of human pathogenic strains.</title>
        <authorList>
            <person name="Rohmer L."/>
            <person name="Fong C."/>
            <person name="Abmayr S."/>
            <person name="Wasnick M."/>
            <person name="Larson Freeman T.J."/>
            <person name="Radey M."/>
            <person name="Guina T."/>
            <person name="Svensson K."/>
            <person name="Hayden H.S."/>
            <person name="Jacobs M."/>
            <person name="Gallagher L.A."/>
            <person name="Manoil C."/>
            <person name="Ernst R.K."/>
            <person name="Drees B."/>
            <person name="Buckley D."/>
            <person name="Haugen E."/>
            <person name="Bovee D."/>
            <person name="Zhou Y."/>
            <person name="Chang J."/>
            <person name="Levy R."/>
            <person name="Lim R."/>
            <person name="Gillett W."/>
            <person name="Guenthener D."/>
            <person name="Kang A."/>
            <person name="Shaffer S.A."/>
            <person name="Taylor G."/>
            <person name="Chen J."/>
            <person name="Gallis B."/>
            <person name="D'Argenio D.A."/>
            <person name="Forsman M."/>
            <person name="Olson M.V."/>
            <person name="Goodlett D.R."/>
            <person name="Kaul R."/>
            <person name="Miller S.I."/>
            <person name="Brittnacher M.J."/>
        </authorList>
    </citation>
    <scope>NUCLEOTIDE SEQUENCE [LARGE SCALE GENOMIC DNA]</scope>
    <source>
        <strain>U112</strain>
    </source>
</reference>
<keyword id="KW-0963">Cytoplasm</keyword>
<keyword id="KW-0378">Hydrolase</keyword>
<keyword id="KW-0540">Nuclease</keyword>
<keyword id="KW-0690">Ribosome biogenesis</keyword>
<protein>
    <recommendedName>
        <fullName evidence="1">Putative pre-16S rRNA nuclease</fullName>
        <ecNumber evidence="1">3.1.-.-</ecNumber>
    </recommendedName>
</protein>
<accession>A0Q690</accession>